<organism>
    <name type="scientific">Synechocystis sp. (strain ATCC 27184 / PCC 6803 / Kazusa)</name>
    <dbReference type="NCBI Taxonomy" id="1111708"/>
    <lineage>
        <taxon>Bacteria</taxon>
        <taxon>Bacillati</taxon>
        <taxon>Cyanobacteriota</taxon>
        <taxon>Cyanophyceae</taxon>
        <taxon>Synechococcales</taxon>
        <taxon>Merismopediaceae</taxon>
        <taxon>Synechocystis</taxon>
    </lineage>
</organism>
<comment type="function">
    <text evidence="1">Exhibits a very high intrinsic GTPase hydrolysis rate. Involved in the addition of a carboxymethylaminomethyl (cmnm) group at the wobble position (U34) of certain tRNAs, forming tRNA-cmnm(5)s(2)U34.</text>
</comment>
<comment type="cofactor">
    <cofactor evidence="1">
        <name>K(+)</name>
        <dbReference type="ChEBI" id="CHEBI:29103"/>
    </cofactor>
    <text evidence="1">Binds 1 potassium ion per subunit.</text>
</comment>
<comment type="subunit">
    <text evidence="1">Homodimer. Heterotetramer of two MnmE and two MnmG subunits.</text>
</comment>
<comment type="subcellular location">
    <subcellularLocation>
        <location evidence="1">Cytoplasm</location>
    </subcellularLocation>
</comment>
<comment type="similarity">
    <text evidence="1">Belongs to the TRAFAC class TrmE-Era-EngA-EngB-Septin-like GTPase superfamily. TrmE GTPase family.</text>
</comment>
<protein>
    <recommendedName>
        <fullName evidence="1">tRNA modification GTPase MnmE</fullName>
        <ecNumber evidence="1">3.6.-.-</ecNumber>
    </recommendedName>
</protein>
<sequence length="456" mass="49982">MQLEDTIAAIATAIVPQQGSIGVVRLSGPQSLTIAKTLFDAPGNQTWESHRILYGHVRHPQTKAAIDEALLLLMLAPRSYTKEDVVEFQCHGGIMPVQQVLQLCLQQGARLAQPGEFSFRAFLNGRLDLTQAESISELVGAQSPQAAAIALAGLQGKLAQPIRDLRNTCLDILAEVEARIDFEDDLPPLDEDSIRQQLQNLYQQLEDILNTAQRGELLRTGLKVAIVGQPNVGKSSLLNAWSRTDRAIVTDLPGTTRDVVESQLVVEGIPIQVLDTAGIRETADQVEQIGVERSRKAAQQADLVLLTVDAHQGWTEADQLIYEQVKDRPLILVINKIDLGRADLVSYPPEITNTVLTAAAANLGIEALENAIIEQVNQTNLSPQNLDFAINQRQEAVLTEAQLALKQLQQTMAEQLPLDFWTIDLRLAINALGQVTGETVTESVLDRIFSRFCIGK</sequence>
<gene>
    <name evidence="1" type="primary">mnmE</name>
    <name evidence="1" type="synonym">thdF</name>
    <name evidence="1" type="synonym">trmE</name>
    <name type="ordered locus">sll1615</name>
</gene>
<name>MNME_SYNY3</name>
<accession>P73839</accession>
<accession>P72523</accession>
<reference key="1">
    <citation type="journal article" date="1996" name="DNA Res.">
        <title>Sequence analysis of the genome of the unicellular cyanobacterium Synechocystis sp. strain PCC6803. II. Sequence determination of the entire genome and assignment of potential protein-coding regions.</title>
        <authorList>
            <person name="Kaneko T."/>
            <person name="Sato S."/>
            <person name="Kotani H."/>
            <person name="Tanaka A."/>
            <person name="Asamizu E."/>
            <person name="Nakamura Y."/>
            <person name="Miyajima N."/>
            <person name="Hirosawa M."/>
            <person name="Sugiura M."/>
            <person name="Sasamoto S."/>
            <person name="Kimura T."/>
            <person name="Hosouchi T."/>
            <person name="Matsuno A."/>
            <person name="Muraki A."/>
            <person name="Nakazaki N."/>
            <person name="Naruo K."/>
            <person name="Okumura S."/>
            <person name="Shimpo S."/>
            <person name="Takeuchi C."/>
            <person name="Wada T."/>
            <person name="Watanabe A."/>
            <person name="Yamada M."/>
            <person name="Yasuda M."/>
            <person name="Tabata S."/>
        </authorList>
    </citation>
    <scope>NUCLEOTIDE SEQUENCE [LARGE SCALE GENOMIC DNA]</scope>
    <source>
        <strain>ATCC 27184 / PCC 6803 / Kazusa</strain>
    </source>
</reference>
<reference key="2">
    <citation type="submission" date="1996-09" db="EMBL/GenBank/DDBJ databases">
        <authorList>
            <person name="Geisler M."/>
            <person name="Jakobs B."/>
            <person name="Richter J."/>
            <person name="Schumann J."/>
        </authorList>
    </citation>
    <scope>NUCLEOTIDE SEQUENCE [GENOMIC DNA]</scope>
</reference>
<evidence type="ECO:0000255" key="1">
    <source>
        <dbReference type="HAMAP-Rule" id="MF_00379"/>
    </source>
</evidence>
<evidence type="ECO:0000305" key="2"/>
<proteinExistence type="inferred from homology"/>
<feature type="chain" id="PRO_0000188938" description="tRNA modification GTPase MnmE">
    <location>
        <begin position="1"/>
        <end position="456"/>
    </location>
</feature>
<feature type="domain" description="TrmE-type G">
    <location>
        <begin position="221"/>
        <end position="377"/>
    </location>
</feature>
<feature type="binding site" evidence="1">
    <location>
        <position position="25"/>
    </location>
    <ligand>
        <name>(6S)-5-formyl-5,6,7,8-tetrahydrofolate</name>
        <dbReference type="ChEBI" id="CHEBI:57457"/>
    </ligand>
</feature>
<feature type="binding site" evidence="1">
    <location>
        <position position="87"/>
    </location>
    <ligand>
        <name>(6S)-5-formyl-5,6,7,8-tetrahydrofolate</name>
        <dbReference type="ChEBI" id="CHEBI:57457"/>
    </ligand>
</feature>
<feature type="binding site" evidence="1">
    <location>
        <position position="126"/>
    </location>
    <ligand>
        <name>(6S)-5-formyl-5,6,7,8-tetrahydrofolate</name>
        <dbReference type="ChEBI" id="CHEBI:57457"/>
    </ligand>
</feature>
<feature type="binding site" evidence="1">
    <location>
        <begin position="231"/>
        <end position="236"/>
    </location>
    <ligand>
        <name>GTP</name>
        <dbReference type="ChEBI" id="CHEBI:37565"/>
    </ligand>
</feature>
<feature type="binding site" evidence="1">
    <location>
        <position position="231"/>
    </location>
    <ligand>
        <name>K(+)</name>
        <dbReference type="ChEBI" id="CHEBI:29103"/>
    </ligand>
</feature>
<feature type="binding site" evidence="1">
    <location>
        <position position="235"/>
    </location>
    <ligand>
        <name>Mg(2+)</name>
        <dbReference type="ChEBI" id="CHEBI:18420"/>
    </ligand>
</feature>
<feature type="binding site" evidence="1">
    <location>
        <begin position="250"/>
        <end position="256"/>
    </location>
    <ligand>
        <name>GTP</name>
        <dbReference type="ChEBI" id="CHEBI:37565"/>
    </ligand>
</feature>
<feature type="binding site" evidence="1">
    <location>
        <position position="250"/>
    </location>
    <ligand>
        <name>K(+)</name>
        <dbReference type="ChEBI" id="CHEBI:29103"/>
    </ligand>
</feature>
<feature type="binding site" evidence="1">
    <location>
        <position position="252"/>
    </location>
    <ligand>
        <name>K(+)</name>
        <dbReference type="ChEBI" id="CHEBI:29103"/>
    </ligand>
</feature>
<feature type="binding site" evidence="1">
    <location>
        <position position="255"/>
    </location>
    <ligand>
        <name>K(+)</name>
        <dbReference type="ChEBI" id="CHEBI:29103"/>
    </ligand>
</feature>
<feature type="binding site" evidence="1">
    <location>
        <position position="256"/>
    </location>
    <ligand>
        <name>Mg(2+)</name>
        <dbReference type="ChEBI" id="CHEBI:18420"/>
    </ligand>
</feature>
<feature type="binding site" evidence="1">
    <location>
        <begin position="275"/>
        <end position="278"/>
    </location>
    <ligand>
        <name>GTP</name>
        <dbReference type="ChEBI" id="CHEBI:37565"/>
    </ligand>
</feature>
<feature type="binding site" evidence="1">
    <location>
        <position position="456"/>
    </location>
    <ligand>
        <name>(6S)-5-formyl-5,6,7,8-tetrahydrofolate</name>
        <dbReference type="ChEBI" id="CHEBI:57457"/>
    </ligand>
</feature>
<feature type="sequence conflict" description="In Ref. 2; CAA66716." evidence="2" ref="2">
    <original>A</original>
    <variation>R</variation>
    <location>
        <position position="9"/>
    </location>
</feature>
<feature type="sequence conflict" description="In Ref. 2; CAA66716." evidence="2" ref="2">
    <original>I</original>
    <variation>H</variation>
    <location>
        <position position="135"/>
    </location>
</feature>
<feature type="sequence conflict" description="In Ref. 2; CAA66716." evidence="2" ref="2">
    <original>A</original>
    <variation>G</variation>
    <location>
        <position position="147"/>
    </location>
</feature>
<feature type="sequence conflict" description="In Ref. 2; CAA66716." evidence="2" ref="2">
    <original>R</original>
    <variation>A</variation>
    <location>
        <position position="214"/>
    </location>
</feature>
<feature type="sequence conflict" description="In Ref. 2; CAA66716." evidence="2" ref="2">
    <original>I</original>
    <variation>M</variation>
    <location>
        <position position="429"/>
    </location>
</feature>
<feature type="sequence conflict" description="In Ref. 2; CAA66716." evidence="2" ref="2">
    <original>Q</original>
    <variation>E</variation>
    <location>
        <position position="434"/>
    </location>
</feature>
<dbReference type="EC" id="3.6.-.-" evidence="1"/>
<dbReference type="EMBL" id="BA000022">
    <property type="protein sequence ID" value="BAA17896.1"/>
    <property type="molecule type" value="Genomic_DNA"/>
</dbReference>
<dbReference type="EMBL" id="X98090">
    <property type="protein sequence ID" value="CAA66716.1"/>
    <property type="molecule type" value="Genomic_DNA"/>
</dbReference>
<dbReference type="PIR" id="S75034">
    <property type="entry name" value="S75034"/>
</dbReference>
<dbReference type="SMR" id="P73839"/>
<dbReference type="FunCoup" id="P73839">
    <property type="interactions" value="459"/>
</dbReference>
<dbReference type="STRING" id="1148.gene:10498765"/>
<dbReference type="PaxDb" id="1148-1652979"/>
<dbReference type="EnsemblBacteria" id="BAA17896">
    <property type="protein sequence ID" value="BAA17896"/>
    <property type="gene ID" value="BAA17896"/>
</dbReference>
<dbReference type="KEGG" id="syn:sll1615"/>
<dbReference type="eggNOG" id="COG0486">
    <property type="taxonomic scope" value="Bacteria"/>
</dbReference>
<dbReference type="InParanoid" id="P73839"/>
<dbReference type="PhylomeDB" id="P73839"/>
<dbReference type="Proteomes" id="UP000001425">
    <property type="component" value="Chromosome"/>
</dbReference>
<dbReference type="GO" id="GO:0005737">
    <property type="term" value="C:cytoplasm"/>
    <property type="evidence" value="ECO:0000318"/>
    <property type="project" value="GO_Central"/>
</dbReference>
<dbReference type="GO" id="GO:0005829">
    <property type="term" value="C:cytosol"/>
    <property type="evidence" value="ECO:0000318"/>
    <property type="project" value="GO_Central"/>
</dbReference>
<dbReference type="GO" id="GO:0005525">
    <property type="term" value="F:GTP binding"/>
    <property type="evidence" value="ECO:0007669"/>
    <property type="project" value="UniProtKB-UniRule"/>
</dbReference>
<dbReference type="GO" id="GO:0003924">
    <property type="term" value="F:GTPase activity"/>
    <property type="evidence" value="ECO:0007669"/>
    <property type="project" value="UniProtKB-UniRule"/>
</dbReference>
<dbReference type="GO" id="GO:0046872">
    <property type="term" value="F:metal ion binding"/>
    <property type="evidence" value="ECO:0007669"/>
    <property type="project" value="UniProtKB-KW"/>
</dbReference>
<dbReference type="GO" id="GO:0030488">
    <property type="term" value="P:tRNA methylation"/>
    <property type="evidence" value="ECO:0000318"/>
    <property type="project" value="GO_Central"/>
</dbReference>
<dbReference type="GO" id="GO:0002098">
    <property type="term" value="P:tRNA wobble uridine modification"/>
    <property type="evidence" value="ECO:0000318"/>
    <property type="project" value="GO_Central"/>
</dbReference>
<dbReference type="CDD" id="cd04164">
    <property type="entry name" value="trmE"/>
    <property type="match status" value="1"/>
</dbReference>
<dbReference type="CDD" id="cd14858">
    <property type="entry name" value="TrmE_N"/>
    <property type="match status" value="1"/>
</dbReference>
<dbReference type="FunFam" id="3.30.1360.120:FF:000003">
    <property type="entry name" value="tRNA modification GTPase MnmE"/>
    <property type="match status" value="1"/>
</dbReference>
<dbReference type="FunFam" id="3.40.50.300:FF:000494">
    <property type="entry name" value="tRNA modification GTPase MnmE"/>
    <property type="match status" value="1"/>
</dbReference>
<dbReference type="Gene3D" id="3.40.50.300">
    <property type="entry name" value="P-loop containing nucleotide triphosphate hydrolases"/>
    <property type="match status" value="1"/>
</dbReference>
<dbReference type="Gene3D" id="3.30.1360.120">
    <property type="entry name" value="Probable tRNA modification gtpase trme, domain 1"/>
    <property type="match status" value="1"/>
</dbReference>
<dbReference type="Gene3D" id="1.20.120.430">
    <property type="entry name" value="tRNA modification GTPase MnmE domain 2"/>
    <property type="match status" value="1"/>
</dbReference>
<dbReference type="HAMAP" id="MF_00379">
    <property type="entry name" value="GTPase_MnmE"/>
    <property type="match status" value="1"/>
</dbReference>
<dbReference type="InterPro" id="IPR031168">
    <property type="entry name" value="G_TrmE"/>
</dbReference>
<dbReference type="InterPro" id="IPR006073">
    <property type="entry name" value="GTP-bd"/>
</dbReference>
<dbReference type="InterPro" id="IPR018948">
    <property type="entry name" value="GTP-bd_TrmE_N"/>
</dbReference>
<dbReference type="InterPro" id="IPR004520">
    <property type="entry name" value="GTPase_MnmE"/>
</dbReference>
<dbReference type="InterPro" id="IPR027368">
    <property type="entry name" value="MnmE_dom2"/>
</dbReference>
<dbReference type="InterPro" id="IPR025867">
    <property type="entry name" value="MnmE_helical"/>
</dbReference>
<dbReference type="InterPro" id="IPR027417">
    <property type="entry name" value="P-loop_NTPase"/>
</dbReference>
<dbReference type="InterPro" id="IPR005225">
    <property type="entry name" value="Small_GTP-bd"/>
</dbReference>
<dbReference type="InterPro" id="IPR027266">
    <property type="entry name" value="TrmE/GcvT_dom1"/>
</dbReference>
<dbReference type="NCBIfam" id="TIGR00450">
    <property type="entry name" value="mnmE_trmE_thdF"/>
    <property type="match status" value="1"/>
</dbReference>
<dbReference type="NCBIfam" id="NF003661">
    <property type="entry name" value="PRK05291.1-3"/>
    <property type="match status" value="1"/>
</dbReference>
<dbReference type="NCBIfam" id="TIGR00231">
    <property type="entry name" value="small_GTP"/>
    <property type="match status" value="1"/>
</dbReference>
<dbReference type="PANTHER" id="PTHR42714">
    <property type="entry name" value="TRNA MODIFICATION GTPASE GTPBP3"/>
    <property type="match status" value="1"/>
</dbReference>
<dbReference type="PANTHER" id="PTHR42714:SF2">
    <property type="entry name" value="TRNA MODIFICATION GTPASE GTPBP3, MITOCHONDRIAL"/>
    <property type="match status" value="1"/>
</dbReference>
<dbReference type="Pfam" id="PF01926">
    <property type="entry name" value="MMR_HSR1"/>
    <property type="match status" value="1"/>
</dbReference>
<dbReference type="Pfam" id="PF12631">
    <property type="entry name" value="MnmE_helical"/>
    <property type="match status" value="1"/>
</dbReference>
<dbReference type="Pfam" id="PF10396">
    <property type="entry name" value="TrmE_N"/>
    <property type="match status" value="1"/>
</dbReference>
<dbReference type="PRINTS" id="PR00449">
    <property type="entry name" value="RASTRNSFRMNG"/>
</dbReference>
<dbReference type="SUPFAM" id="SSF52540">
    <property type="entry name" value="P-loop containing nucleoside triphosphate hydrolases"/>
    <property type="match status" value="1"/>
</dbReference>
<dbReference type="SUPFAM" id="SSF116878">
    <property type="entry name" value="TrmE connector domain"/>
    <property type="match status" value="1"/>
</dbReference>
<dbReference type="PROSITE" id="PS51709">
    <property type="entry name" value="G_TRME"/>
    <property type="match status" value="1"/>
</dbReference>
<keyword id="KW-0963">Cytoplasm</keyword>
<keyword id="KW-0342">GTP-binding</keyword>
<keyword id="KW-0378">Hydrolase</keyword>
<keyword id="KW-0460">Magnesium</keyword>
<keyword id="KW-0479">Metal-binding</keyword>
<keyword id="KW-0547">Nucleotide-binding</keyword>
<keyword id="KW-0630">Potassium</keyword>
<keyword id="KW-1185">Reference proteome</keyword>
<keyword id="KW-0819">tRNA processing</keyword>